<feature type="chain" id="PRO_0000457379" description="Sodium/hydrogen exchanger 6">
    <location>
        <begin position="1"/>
        <end position="702"/>
    </location>
</feature>
<feature type="transmembrane region" description="Helical; Name=1" evidence="2">
    <location>
        <begin position="72"/>
        <end position="92"/>
    </location>
</feature>
<feature type="transmembrane region" description="Helical; Name=2" evidence="2">
    <location>
        <begin position="104"/>
        <end position="124"/>
    </location>
</feature>
<feature type="transmembrane region" description="Helical; Name=3" evidence="2">
    <location>
        <begin position="177"/>
        <end position="197"/>
    </location>
</feature>
<feature type="transmembrane region" description="Helical; Name=4" evidence="2">
    <location>
        <begin position="212"/>
        <end position="232"/>
    </location>
</feature>
<feature type="transmembrane region" description="Helical; Name=5" evidence="2">
    <location>
        <begin position="253"/>
        <end position="273"/>
    </location>
</feature>
<feature type="transmembrane region" description="Helical; Name=6" evidence="2">
    <location>
        <begin position="279"/>
        <end position="299"/>
    </location>
</feature>
<feature type="transmembrane region" description="Helical; Name=7" evidence="2">
    <location>
        <begin position="325"/>
        <end position="345"/>
    </location>
</feature>
<feature type="transmembrane region" description="Helical; Name=8" evidence="2">
    <location>
        <begin position="373"/>
        <end position="393"/>
    </location>
</feature>
<feature type="transmembrane region" description="Helical; Name=9" evidence="2">
    <location>
        <begin position="415"/>
        <end position="435"/>
    </location>
</feature>
<feature type="transmembrane region" description="Helical; Name=10" evidence="2">
    <location>
        <begin position="437"/>
        <end position="457"/>
    </location>
</feature>
<feature type="transmembrane region" description="Helical; Name=11" evidence="2">
    <location>
        <begin position="480"/>
        <end position="500"/>
    </location>
</feature>
<feature type="transmembrane region" description="Helical; Name=12" evidence="2">
    <location>
        <begin position="516"/>
        <end position="536"/>
    </location>
</feature>
<feature type="mutagenesis site" description="Mice have normal brain size at 6 months of age and do not show cerebellar degeneration or defective neuronal arborization. Neurons from male mice also do not demonstrate an abnormality in intraendosomal pH compared with controls." evidence="7">
    <original>A</original>
    <variation>S</variation>
    <location>
        <position position="11"/>
    </location>
</feature>
<feature type="sequence conflict" description="In Ref. 1; BAC27816." evidence="9" ref="1">
    <original>D</original>
    <variation>G</variation>
    <location>
        <position position="695"/>
    </location>
</feature>
<protein>
    <recommendedName>
        <fullName>Sodium/hydrogen exchanger 6</fullName>
    </recommendedName>
    <alternativeName>
        <fullName>Na(+)/H(+) exchanger 6</fullName>
        <shortName>NHE-6</shortName>
    </alternativeName>
    <alternativeName>
        <fullName>Sodium/hydrogen exchanger</fullName>
    </alternativeName>
    <alternativeName>
        <fullName>Solute carrier family 9 member 6</fullName>
    </alternativeName>
</protein>
<name>SL9A6_MOUSE</name>
<dbReference type="EMBL" id="AK032326">
    <property type="protein sequence ID" value="BAC27816.1"/>
    <property type="molecule type" value="mRNA"/>
</dbReference>
<dbReference type="EMBL" id="AC124584">
    <property type="status" value="NOT_ANNOTATED_CDS"/>
    <property type="molecule type" value="Genomic_DNA"/>
</dbReference>
<dbReference type="EMBL" id="AL672085">
    <property type="status" value="NOT_ANNOTATED_CDS"/>
    <property type="molecule type" value="Genomic_DNA"/>
</dbReference>
<dbReference type="EMBL" id="BC130221">
    <property type="protein sequence ID" value="AAI30222.1"/>
    <property type="molecule type" value="mRNA"/>
</dbReference>
<dbReference type="CCDS" id="CCDS40979.1"/>
<dbReference type="RefSeq" id="NP_766368.2">
    <property type="nucleotide sequence ID" value="NM_172780.5"/>
</dbReference>
<dbReference type="SMR" id="A1L3P4"/>
<dbReference type="FunCoup" id="A1L3P4">
    <property type="interactions" value="1680"/>
</dbReference>
<dbReference type="STRING" id="10090.ENSMUSP00000076922"/>
<dbReference type="GlyGen" id="A1L3P4">
    <property type="glycosylation" value="2 sites, 2 N-linked glycans (2 sites)"/>
</dbReference>
<dbReference type="iPTMnet" id="A1L3P4"/>
<dbReference type="PhosphoSitePlus" id="A1L3P4"/>
<dbReference type="SwissPalm" id="A1L3P4"/>
<dbReference type="jPOST" id="A1L3P4"/>
<dbReference type="PaxDb" id="10090-ENSMUSP00000076922"/>
<dbReference type="PeptideAtlas" id="A1L3P4"/>
<dbReference type="PRIDE" id="A1L3P4"/>
<dbReference type="ProteomicsDB" id="333294"/>
<dbReference type="Antibodypedia" id="30408">
    <property type="antibodies" value="157 antibodies from 26 providers"/>
</dbReference>
<dbReference type="DNASU" id="236794"/>
<dbReference type="Ensembl" id="ENSMUST00000077741.12">
    <property type="protein sequence ID" value="ENSMUSP00000076922.6"/>
    <property type="gene ID" value="ENSMUSG00000060681.16"/>
</dbReference>
<dbReference type="GeneID" id="236794"/>
<dbReference type="KEGG" id="mmu:236794"/>
<dbReference type="UCSC" id="uc009tgk.2">
    <property type="organism name" value="mouse"/>
</dbReference>
<dbReference type="AGR" id="MGI:2443511"/>
<dbReference type="CTD" id="10479"/>
<dbReference type="MGI" id="MGI:2443511">
    <property type="gene designation" value="Slc9a6"/>
</dbReference>
<dbReference type="VEuPathDB" id="HostDB:ENSMUSG00000060681"/>
<dbReference type="eggNOG" id="KOG1965">
    <property type="taxonomic scope" value="Eukaryota"/>
</dbReference>
<dbReference type="GeneTree" id="ENSGT00940000153460"/>
<dbReference type="InParanoid" id="A1L3P4"/>
<dbReference type="OMA" id="FTYVRRF"/>
<dbReference type="OrthoDB" id="196264at2759"/>
<dbReference type="TreeFam" id="TF318755"/>
<dbReference type="Reactome" id="R-MMU-425986">
    <property type="pathway name" value="Sodium/Proton exchangers"/>
</dbReference>
<dbReference type="BioGRID-ORCS" id="236794">
    <property type="hits" value="0 hits in 78 CRISPR screens"/>
</dbReference>
<dbReference type="PRO" id="PR:A1L3P4"/>
<dbReference type="Proteomes" id="UP000000589">
    <property type="component" value="Chromosome X"/>
</dbReference>
<dbReference type="RNAct" id="A1L3P4">
    <property type="molecule type" value="protein"/>
</dbReference>
<dbReference type="Bgee" id="ENSMUSG00000060681">
    <property type="expression patterns" value="Expressed in superior cervical ganglion and 218 other cell types or tissues"/>
</dbReference>
<dbReference type="ExpressionAtlas" id="A1L3P4">
    <property type="expression patterns" value="baseline and differential"/>
</dbReference>
<dbReference type="GO" id="GO:0043679">
    <property type="term" value="C:axon terminus"/>
    <property type="evidence" value="ECO:0000314"/>
    <property type="project" value="MGI"/>
</dbReference>
<dbReference type="GO" id="GO:0044308">
    <property type="term" value="C:axonal spine"/>
    <property type="evidence" value="ECO:0000314"/>
    <property type="project" value="MGI"/>
</dbReference>
<dbReference type="GO" id="GO:0031410">
    <property type="term" value="C:cytoplasmic vesicle"/>
    <property type="evidence" value="ECO:0000314"/>
    <property type="project" value="MGI"/>
</dbReference>
<dbReference type="GO" id="GO:0030425">
    <property type="term" value="C:dendrite"/>
    <property type="evidence" value="ECO:0000314"/>
    <property type="project" value="MGI"/>
</dbReference>
<dbReference type="GO" id="GO:0005769">
    <property type="term" value="C:early endosome"/>
    <property type="evidence" value="ECO:0000314"/>
    <property type="project" value="MGI"/>
</dbReference>
<dbReference type="GO" id="GO:0031901">
    <property type="term" value="C:early endosome membrane"/>
    <property type="evidence" value="ECO:0007669"/>
    <property type="project" value="UniProtKB-SubCell"/>
</dbReference>
<dbReference type="GO" id="GO:0005768">
    <property type="term" value="C:endosome"/>
    <property type="evidence" value="ECO:0000314"/>
    <property type="project" value="MGI"/>
</dbReference>
<dbReference type="GO" id="GO:0098978">
    <property type="term" value="C:glutamatergic synapse"/>
    <property type="evidence" value="ECO:0000314"/>
    <property type="project" value="SynGO"/>
</dbReference>
<dbReference type="GO" id="GO:0005770">
    <property type="term" value="C:late endosome"/>
    <property type="evidence" value="ECO:0000314"/>
    <property type="project" value="MGI"/>
</dbReference>
<dbReference type="GO" id="GO:0031902">
    <property type="term" value="C:late endosome membrane"/>
    <property type="evidence" value="ECO:0007669"/>
    <property type="project" value="UniProtKB-SubCell"/>
</dbReference>
<dbReference type="GO" id="GO:0005739">
    <property type="term" value="C:mitochondrion"/>
    <property type="evidence" value="ECO:0007005"/>
    <property type="project" value="MGI"/>
</dbReference>
<dbReference type="GO" id="GO:0005886">
    <property type="term" value="C:plasma membrane"/>
    <property type="evidence" value="ECO:0000314"/>
    <property type="project" value="UniProtKB"/>
</dbReference>
<dbReference type="GO" id="GO:0055037">
    <property type="term" value="C:recycling endosome"/>
    <property type="evidence" value="ECO:0000314"/>
    <property type="project" value="MGI"/>
</dbReference>
<dbReference type="GO" id="GO:0055038">
    <property type="term" value="C:recycling endosome membrane"/>
    <property type="evidence" value="ECO:0007669"/>
    <property type="project" value="UniProtKB-SubCell"/>
</dbReference>
<dbReference type="GO" id="GO:0098685">
    <property type="term" value="C:Schaffer collateral - CA1 synapse"/>
    <property type="evidence" value="ECO:0000314"/>
    <property type="project" value="SynGO"/>
</dbReference>
<dbReference type="GO" id="GO:0045202">
    <property type="term" value="C:synapse"/>
    <property type="evidence" value="ECO:0000314"/>
    <property type="project" value="MGI"/>
</dbReference>
<dbReference type="GO" id="GO:0015386">
    <property type="term" value="F:potassium:proton antiporter activity"/>
    <property type="evidence" value="ECO:0000314"/>
    <property type="project" value="UniProtKB"/>
</dbReference>
<dbReference type="GO" id="GO:0015385">
    <property type="term" value="F:sodium:proton antiporter activity"/>
    <property type="evidence" value="ECO:0000314"/>
    <property type="project" value="UniProtKB"/>
</dbReference>
<dbReference type="GO" id="GO:0048675">
    <property type="term" value="P:axon extension"/>
    <property type="evidence" value="ECO:0000266"/>
    <property type="project" value="MGI"/>
</dbReference>
<dbReference type="GO" id="GO:0031547">
    <property type="term" value="P:brain-derived neurotrophic factor receptor signaling pathway"/>
    <property type="evidence" value="ECO:0000315"/>
    <property type="project" value="MGI"/>
</dbReference>
<dbReference type="GO" id="GO:0097484">
    <property type="term" value="P:dendrite extension"/>
    <property type="evidence" value="ECO:0000266"/>
    <property type="project" value="MGI"/>
</dbReference>
<dbReference type="GO" id="GO:0060996">
    <property type="term" value="P:dendritic spine development"/>
    <property type="evidence" value="ECO:0000315"/>
    <property type="project" value="MGI"/>
</dbReference>
<dbReference type="GO" id="GO:0030010">
    <property type="term" value="P:establishment of cell polarity"/>
    <property type="evidence" value="ECO:0000250"/>
    <property type="project" value="UniProtKB"/>
</dbReference>
<dbReference type="GO" id="GO:0048812">
    <property type="term" value="P:neuron projection morphogenesis"/>
    <property type="evidence" value="ECO:0000266"/>
    <property type="project" value="MGI"/>
</dbReference>
<dbReference type="GO" id="GO:1902600">
    <property type="term" value="P:proton transmembrane transport"/>
    <property type="evidence" value="ECO:0000315"/>
    <property type="project" value="MGI"/>
</dbReference>
<dbReference type="GO" id="GO:0051453">
    <property type="term" value="P:regulation of intracellular pH"/>
    <property type="evidence" value="ECO:0000314"/>
    <property type="project" value="UniProtKB"/>
</dbReference>
<dbReference type="GO" id="GO:0051386">
    <property type="term" value="P:regulation of neurotrophin TRK receptor signaling pathway"/>
    <property type="evidence" value="ECO:0000315"/>
    <property type="project" value="MGI"/>
</dbReference>
<dbReference type="GO" id="GO:0099072">
    <property type="term" value="P:regulation of postsynaptic membrane neurotransmitter receptor levels"/>
    <property type="evidence" value="ECO:0000314"/>
    <property type="project" value="SynGO"/>
</dbReference>
<dbReference type="GO" id="GO:0050808">
    <property type="term" value="P:synapse organization"/>
    <property type="evidence" value="ECO:0000315"/>
    <property type="project" value="MGI"/>
</dbReference>
<dbReference type="Gene3D" id="6.10.140.1330">
    <property type="match status" value="1"/>
</dbReference>
<dbReference type="InterPro" id="IPR018422">
    <property type="entry name" value="Cation/H_exchanger_CPA1"/>
</dbReference>
<dbReference type="InterPro" id="IPR006153">
    <property type="entry name" value="Cation/H_exchanger_TM"/>
</dbReference>
<dbReference type="InterPro" id="IPR004709">
    <property type="entry name" value="NaH_exchanger"/>
</dbReference>
<dbReference type="InterPro" id="IPR002090">
    <property type="entry name" value="NHE-6/7/9"/>
</dbReference>
<dbReference type="NCBIfam" id="TIGR00840">
    <property type="entry name" value="b_cpa1"/>
    <property type="match status" value="1"/>
</dbReference>
<dbReference type="PANTHER" id="PTHR10110">
    <property type="entry name" value="SODIUM/HYDROGEN EXCHANGER"/>
    <property type="match status" value="1"/>
</dbReference>
<dbReference type="PANTHER" id="PTHR10110:SF94">
    <property type="entry name" value="SODIUM_HYDROGEN EXCHANGER 6"/>
    <property type="match status" value="1"/>
</dbReference>
<dbReference type="Pfam" id="PF00999">
    <property type="entry name" value="Na_H_Exchanger"/>
    <property type="match status" value="1"/>
</dbReference>
<dbReference type="PRINTS" id="PR01084">
    <property type="entry name" value="NAHEXCHNGR"/>
</dbReference>
<dbReference type="PRINTS" id="PR01088">
    <property type="entry name" value="NAHEXCHNGR6"/>
</dbReference>
<reference key="1">
    <citation type="journal article" date="2005" name="Science">
        <title>The transcriptional landscape of the mammalian genome.</title>
        <authorList>
            <person name="Carninci P."/>
            <person name="Kasukawa T."/>
            <person name="Katayama S."/>
            <person name="Gough J."/>
            <person name="Frith M.C."/>
            <person name="Maeda N."/>
            <person name="Oyama R."/>
            <person name="Ravasi T."/>
            <person name="Lenhard B."/>
            <person name="Wells C."/>
            <person name="Kodzius R."/>
            <person name="Shimokawa K."/>
            <person name="Bajic V.B."/>
            <person name="Brenner S.E."/>
            <person name="Batalov S."/>
            <person name="Forrest A.R."/>
            <person name="Zavolan M."/>
            <person name="Davis M.J."/>
            <person name="Wilming L.G."/>
            <person name="Aidinis V."/>
            <person name="Allen J.E."/>
            <person name="Ambesi-Impiombato A."/>
            <person name="Apweiler R."/>
            <person name="Aturaliya R.N."/>
            <person name="Bailey T.L."/>
            <person name="Bansal M."/>
            <person name="Baxter L."/>
            <person name="Beisel K.W."/>
            <person name="Bersano T."/>
            <person name="Bono H."/>
            <person name="Chalk A.M."/>
            <person name="Chiu K.P."/>
            <person name="Choudhary V."/>
            <person name="Christoffels A."/>
            <person name="Clutterbuck D.R."/>
            <person name="Crowe M.L."/>
            <person name="Dalla E."/>
            <person name="Dalrymple B.P."/>
            <person name="de Bono B."/>
            <person name="Della Gatta G."/>
            <person name="di Bernardo D."/>
            <person name="Down T."/>
            <person name="Engstrom P."/>
            <person name="Fagiolini M."/>
            <person name="Faulkner G."/>
            <person name="Fletcher C.F."/>
            <person name="Fukushima T."/>
            <person name="Furuno M."/>
            <person name="Futaki S."/>
            <person name="Gariboldi M."/>
            <person name="Georgii-Hemming P."/>
            <person name="Gingeras T.R."/>
            <person name="Gojobori T."/>
            <person name="Green R.E."/>
            <person name="Gustincich S."/>
            <person name="Harbers M."/>
            <person name="Hayashi Y."/>
            <person name="Hensch T.K."/>
            <person name="Hirokawa N."/>
            <person name="Hill D."/>
            <person name="Huminiecki L."/>
            <person name="Iacono M."/>
            <person name="Ikeo K."/>
            <person name="Iwama A."/>
            <person name="Ishikawa T."/>
            <person name="Jakt M."/>
            <person name="Kanapin A."/>
            <person name="Katoh M."/>
            <person name="Kawasawa Y."/>
            <person name="Kelso J."/>
            <person name="Kitamura H."/>
            <person name="Kitano H."/>
            <person name="Kollias G."/>
            <person name="Krishnan S.P."/>
            <person name="Kruger A."/>
            <person name="Kummerfeld S.K."/>
            <person name="Kurochkin I.V."/>
            <person name="Lareau L.F."/>
            <person name="Lazarevic D."/>
            <person name="Lipovich L."/>
            <person name="Liu J."/>
            <person name="Liuni S."/>
            <person name="McWilliam S."/>
            <person name="Madan Babu M."/>
            <person name="Madera M."/>
            <person name="Marchionni L."/>
            <person name="Matsuda H."/>
            <person name="Matsuzawa S."/>
            <person name="Miki H."/>
            <person name="Mignone F."/>
            <person name="Miyake S."/>
            <person name="Morris K."/>
            <person name="Mottagui-Tabar S."/>
            <person name="Mulder N."/>
            <person name="Nakano N."/>
            <person name="Nakauchi H."/>
            <person name="Ng P."/>
            <person name="Nilsson R."/>
            <person name="Nishiguchi S."/>
            <person name="Nishikawa S."/>
            <person name="Nori F."/>
            <person name="Ohara O."/>
            <person name="Okazaki Y."/>
            <person name="Orlando V."/>
            <person name="Pang K.C."/>
            <person name="Pavan W.J."/>
            <person name="Pavesi G."/>
            <person name="Pesole G."/>
            <person name="Petrovsky N."/>
            <person name="Piazza S."/>
            <person name="Reed J."/>
            <person name="Reid J.F."/>
            <person name="Ring B.Z."/>
            <person name="Ringwald M."/>
            <person name="Rost B."/>
            <person name="Ruan Y."/>
            <person name="Salzberg S.L."/>
            <person name="Sandelin A."/>
            <person name="Schneider C."/>
            <person name="Schoenbach C."/>
            <person name="Sekiguchi K."/>
            <person name="Semple C.A."/>
            <person name="Seno S."/>
            <person name="Sessa L."/>
            <person name="Sheng Y."/>
            <person name="Shibata Y."/>
            <person name="Shimada H."/>
            <person name="Shimada K."/>
            <person name="Silva D."/>
            <person name="Sinclair B."/>
            <person name="Sperling S."/>
            <person name="Stupka E."/>
            <person name="Sugiura K."/>
            <person name="Sultana R."/>
            <person name="Takenaka Y."/>
            <person name="Taki K."/>
            <person name="Tammoja K."/>
            <person name="Tan S.L."/>
            <person name="Tang S."/>
            <person name="Taylor M.S."/>
            <person name="Tegner J."/>
            <person name="Teichmann S.A."/>
            <person name="Ueda H.R."/>
            <person name="van Nimwegen E."/>
            <person name="Verardo R."/>
            <person name="Wei C.L."/>
            <person name="Yagi K."/>
            <person name="Yamanishi H."/>
            <person name="Zabarovsky E."/>
            <person name="Zhu S."/>
            <person name="Zimmer A."/>
            <person name="Hide W."/>
            <person name="Bult C."/>
            <person name="Grimmond S.M."/>
            <person name="Teasdale R.D."/>
            <person name="Liu E.T."/>
            <person name="Brusic V."/>
            <person name="Quackenbush J."/>
            <person name="Wahlestedt C."/>
            <person name="Mattick J.S."/>
            <person name="Hume D.A."/>
            <person name="Kai C."/>
            <person name="Sasaki D."/>
            <person name="Tomaru Y."/>
            <person name="Fukuda S."/>
            <person name="Kanamori-Katayama M."/>
            <person name="Suzuki M."/>
            <person name="Aoki J."/>
            <person name="Arakawa T."/>
            <person name="Iida J."/>
            <person name="Imamura K."/>
            <person name="Itoh M."/>
            <person name="Kato T."/>
            <person name="Kawaji H."/>
            <person name="Kawagashira N."/>
            <person name="Kawashima T."/>
            <person name="Kojima M."/>
            <person name="Kondo S."/>
            <person name="Konno H."/>
            <person name="Nakano K."/>
            <person name="Ninomiya N."/>
            <person name="Nishio T."/>
            <person name="Okada M."/>
            <person name="Plessy C."/>
            <person name="Shibata K."/>
            <person name="Shiraki T."/>
            <person name="Suzuki S."/>
            <person name="Tagami M."/>
            <person name="Waki K."/>
            <person name="Watahiki A."/>
            <person name="Okamura-Oho Y."/>
            <person name="Suzuki H."/>
            <person name="Kawai J."/>
            <person name="Hayashizaki Y."/>
        </authorList>
    </citation>
    <scope>NUCLEOTIDE SEQUENCE [LARGE SCALE MRNA]</scope>
</reference>
<reference key="2">
    <citation type="journal article" date="2009" name="PLoS Biol.">
        <title>Lineage-specific biology revealed by a finished genome assembly of the mouse.</title>
        <authorList>
            <person name="Church D.M."/>
            <person name="Goodstadt L."/>
            <person name="Hillier L.W."/>
            <person name="Zody M.C."/>
            <person name="Goldstein S."/>
            <person name="She X."/>
            <person name="Bult C.J."/>
            <person name="Agarwala R."/>
            <person name="Cherry J.L."/>
            <person name="DiCuccio M."/>
            <person name="Hlavina W."/>
            <person name="Kapustin Y."/>
            <person name="Meric P."/>
            <person name="Maglott D."/>
            <person name="Birtle Z."/>
            <person name="Marques A.C."/>
            <person name="Graves T."/>
            <person name="Zhou S."/>
            <person name="Teague B."/>
            <person name="Potamousis K."/>
            <person name="Churas C."/>
            <person name="Place M."/>
            <person name="Herschleb J."/>
            <person name="Runnheim R."/>
            <person name="Forrest D."/>
            <person name="Amos-Landgraf J."/>
            <person name="Schwartz D.C."/>
            <person name="Cheng Z."/>
            <person name="Lindblad-Toh K."/>
            <person name="Eichler E.E."/>
            <person name="Ponting C.P."/>
        </authorList>
    </citation>
    <scope>NUCLEOTIDE SEQUENCE [LARGE SCALE GENOMIC DNA]</scope>
    <source>
        <strain>C57BL/6J</strain>
    </source>
</reference>
<reference key="3">
    <citation type="journal article" date="2004" name="Genome Res.">
        <title>The status, quality, and expansion of the NIH full-length cDNA project: the Mammalian Gene Collection (MGC).</title>
        <authorList>
            <consortium name="The MGC Project Team"/>
        </authorList>
    </citation>
    <scope>NUCLEOTIDE SEQUENCE [LARGE SCALE MRNA]</scope>
</reference>
<reference key="4">
    <citation type="journal article" date="2009" name="Immunity">
        <title>The phagosomal proteome in interferon-gamma-activated macrophages.</title>
        <authorList>
            <person name="Trost M."/>
            <person name="English L."/>
            <person name="Lemieux S."/>
            <person name="Courcelles M."/>
            <person name="Desjardins M."/>
            <person name="Thibault P."/>
        </authorList>
    </citation>
    <scope>IDENTIFICATION BY MASS SPECTROMETRY [LARGE SCALE ANALYSIS]</scope>
</reference>
<reference key="5">
    <citation type="journal article" date="2010" name="Cell">
        <title>A tissue-specific atlas of mouse protein phosphorylation and expression.</title>
        <authorList>
            <person name="Huttlin E.L."/>
            <person name="Jedrychowski M.P."/>
            <person name="Elias J.E."/>
            <person name="Goswami T."/>
            <person name="Rad R."/>
            <person name="Beausoleil S.A."/>
            <person name="Villen J."/>
            <person name="Haas W."/>
            <person name="Sowa M.E."/>
            <person name="Gygi S.P."/>
        </authorList>
    </citation>
    <scope>IDENTIFICATION BY MASS SPECTROMETRY [LARGE SCALE ANALYSIS]</scope>
</reference>
<reference key="6">
    <citation type="journal article" date="2006" name="J. Neurosci.">
        <title>Vestibular hair bundles control pH with (Na+, K+)/H+ exchangers NHE6 and NHE9.</title>
        <authorList>
            <person name="Hill J.K."/>
            <person name="Brett C.L."/>
            <person name="Chyou A."/>
            <person name="Kallay L.M."/>
            <person name="Sakaguchi M."/>
            <person name="Rao R."/>
            <person name="Gillespie P.G."/>
        </authorList>
    </citation>
    <scope>SUBCELLULAR LOCATION</scope>
    <scope>FUNCTION</scope>
    <scope>TRANSPORTER ACTIVITY</scope>
</reference>
<reference key="7">
    <citation type="journal article" date="2011" name="J. Cell. Physiol.">
        <title>High capacity Na+/H+ exchange activity in mineralizing osteoblasts.</title>
        <authorList>
            <person name="Liu L."/>
            <person name="Schlesinger P.H."/>
            <person name="Slack N.M."/>
            <person name="Friedman P.A."/>
            <person name="Blair H.C."/>
        </authorList>
    </citation>
    <scope>FUNCTION</scope>
    <scope>TRANSPORTER ACTIVITY</scope>
</reference>
<reference key="8">
    <citation type="journal article" date="2013" name="J. Neurosci.">
        <title>Enhanced recruitment of endosomal Na+/H+ exchanger NHE6 into dendritic spines of hippocampal pyramidal neurons during NMDA receptor-dependent long-term potentiation.</title>
        <authorList>
            <person name="Deane E.C."/>
            <person name="Ilie A.E."/>
            <person name="Sizdahkhani S."/>
            <person name="Das Gupta M."/>
            <person name="Orlowski J."/>
            <person name="McKinney R.A."/>
        </authorList>
    </citation>
    <scope>DEVELOPMENTAL STAGE</scope>
    <scope>SUBCELLULAR LOCATION</scope>
</reference>
<reference key="9">
    <citation type="journal article" date="2013" name="Neuron">
        <title>Christianson syndrome protein NHE6 modulates TrkB endosomal signaling required for neuronal circuit development.</title>
        <authorList>
            <person name="Ouyang Q."/>
            <person name="Lizarraga S.B."/>
            <person name="Schmidt M."/>
            <person name="Yang U."/>
            <person name="Gong J."/>
            <person name="Ellisor D."/>
            <person name="Kauer J.A."/>
            <person name="Morrow E.M."/>
        </authorList>
    </citation>
    <scope>SUBCELLULAR LOCATION</scope>
    <scope>DISRUPTION PHENOTYPE</scope>
    <scope>FUNCTION</scope>
</reference>
<reference key="10">
    <citation type="journal article" date="2019" name="ENeuro">
        <title>Functional Assessment In Vivo of the Mouse Homolog of the Human Ala-9-Ser NHE6 Variant.</title>
        <authorList>
            <person name="Ouyang Q."/>
            <person name="Joesch-Cohen L."/>
            <person name="Mishra S."/>
            <person name="Riaz H.A."/>
            <person name="Schmidt M."/>
            <person name="Morrow E.M."/>
        </authorList>
    </citation>
    <scope>MUTAGENESIS OF ALA-11</scope>
</reference>
<reference key="11">
    <citation type="journal article" date="2021" name="J. Neurosci.">
        <title>Loss of Christianson Syndrome Na+/H+ Exchanger 6 (NHE6) Causes Abnormal Endosome Maturation and Trafficking Underlying Lysosome Dysfunction in Neurons.</title>
        <authorList>
            <person name="Pescosolido M.F."/>
            <person name="Ouyang Q."/>
            <person name="Liu J.S."/>
            <person name="Morrow E.M."/>
        </authorList>
    </citation>
    <scope>FUNCTION</scope>
    <scope>SUBCELLULAR LOCATION</scope>
</reference>
<keyword id="KW-1003">Cell membrane</keyword>
<keyword id="KW-0967">Endosome</keyword>
<keyword id="KW-0406">Ion transport</keyword>
<keyword id="KW-0472">Membrane</keyword>
<keyword id="KW-1185">Reference proteome</keyword>
<keyword id="KW-0915">Sodium</keyword>
<keyword id="KW-0739">Sodium transport</keyword>
<keyword id="KW-0812">Transmembrane</keyword>
<keyword id="KW-1133">Transmembrane helix</keyword>
<keyword id="KW-0813">Transport</keyword>
<keyword id="KW-0832">Ubl conjugation</keyword>
<sequence length="702" mass="77953">MAGARRGWRLAPVRRGVCGPRARPLMRPLWLLFAVSFFGWTGALDGSGGTTRAMDEEIVSEKQAEESHRQDSANLLIFILLLTLTILTIWLFKHRRARFLHETGLAMIYGLLVGLVLRYGIHVPSDVNNVTLSCEVQSSPTTLLVNVSGKFYEYTLKGEISSHELNNVQDNEMLRKVTFDPEVFFNILLPPIIFYAGYSLKRRHFFRNLGSILAYAFLGTAISCFVIGSIMYGCVTLMKVTGQLAGDFYFTDCLLFGAIVSATDPVTVLAIFHELQVDVELYALLFGESVLNDAVAIVLSSSIVAYQPAGDNSHTFDVTAMFKSIGIFLGIFSGSFAMGAATGVVTALVTKFTKLREFQLLETGLFFLMSWSTFLLAEAWGFTGVVAVLFCGITQAHYTYNNLSTESQHRTKQLFELLNFLAENFIFSYMGLTLFTFQNHVFNPTFVVGAFIAIFLGRAANIYPLSLLLNLGRRSKIGSNFQHMMMFAGLRGAMAFALAIRDTATYARQMMFSTTLLIVFFTVWVFGGGTTAMLSCLHIRVGVDSDQEHLGVPDNERRTTKAESAWLFRMWYNFDHNYLKPLLTHSGPPLTTTLPACCGPIARCLTSPQAYENQEQLKDDDSDLILNDGDISLTYGDSTVNTESATASAPRRFMGNSSEDALDRELTFGDHELVIRGTRLVLPMDDSEPALNSLDDTRHSPA</sequence>
<evidence type="ECO:0000250" key="1">
    <source>
        <dbReference type="UniProtKB" id="Q92581"/>
    </source>
</evidence>
<evidence type="ECO:0000255" key="2"/>
<evidence type="ECO:0000269" key="3">
    <source>
    </source>
</evidence>
<evidence type="ECO:0000269" key="4">
    <source>
    </source>
</evidence>
<evidence type="ECO:0000269" key="5">
    <source>
    </source>
</evidence>
<evidence type="ECO:0000269" key="6">
    <source>
    </source>
</evidence>
<evidence type="ECO:0000269" key="7">
    <source>
    </source>
</evidence>
<evidence type="ECO:0000269" key="8">
    <source>
    </source>
</evidence>
<evidence type="ECO:0000305" key="9"/>
<evidence type="ECO:0000305" key="10">
    <source>
    </source>
</evidence>
<proteinExistence type="evidence at protein level"/>
<organism>
    <name type="scientific">Mus musculus</name>
    <name type="common">Mouse</name>
    <dbReference type="NCBI Taxonomy" id="10090"/>
    <lineage>
        <taxon>Eukaryota</taxon>
        <taxon>Metazoa</taxon>
        <taxon>Chordata</taxon>
        <taxon>Craniata</taxon>
        <taxon>Vertebrata</taxon>
        <taxon>Euteleostomi</taxon>
        <taxon>Mammalia</taxon>
        <taxon>Eutheria</taxon>
        <taxon>Euarchontoglires</taxon>
        <taxon>Glires</taxon>
        <taxon>Rodentia</taxon>
        <taxon>Myomorpha</taxon>
        <taxon>Muroidea</taxon>
        <taxon>Muridae</taxon>
        <taxon>Murinae</taxon>
        <taxon>Mus</taxon>
        <taxon>Mus</taxon>
    </lineage>
</organism>
<accession>A1L3P4</accession>
<accession>Q8BTG0</accession>
<gene>
    <name type="primary">Slc9a6</name>
    <name type="synonym">Nhe6</name>
</gene>
<comment type="function">
    <text evidence="1 3 4 6 8">Endosomal Na(+), K(+)/H(+) antiporter. Mediates the electroneutral exchange of endosomal luminal H(+) for a cytosolic Na(+) or K(+). By facilitating proton efflux, SLC9A6 counteracts the acidity generated by vacuolar (V)-ATPase, thereby limiting luminal acidification. Responsible for alkalizing and maintaining the endosomal pH, and consequently in, e.g., endosome maturation and trafficking of recycling endosomal cargo (PubMed:17005858, PubMed:21413028, PubMed:24035762, PubMed:34526390). Plays a critical role during neurodevelopment by regulating synaptic development and plasticity (PubMed:21413028, PubMed:34526390). Implicated in the maintenance of cell polarity in a manner that is dependent on its ability to modulate intravesicular pH (By similarity). Regulates intracelular pH in some specialized cells, osteoclasts and stereocilia where this transporter localizes to the plasma membrane (PubMed:17005858, PubMed:21413028).</text>
</comment>
<comment type="catalytic activity">
    <reaction evidence="10">
        <text>Na(+)(in) + H(+)(out) = Na(+)(out) + H(+)(in)</text>
        <dbReference type="Rhea" id="RHEA:29419"/>
        <dbReference type="ChEBI" id="CHEBI:15378"/>
        <dbReference type="ChEBI" id="CHEBI:29101"/>
    </reaction>
</comment>
<comment type="catalytic activity">
    <reaction evidence="3">
        <text>K(+)(in) + H(+)(out) = K(+)(out) + H(+)(in)</text>
        <dbReference type="Rhea" id="RHEA:29467"/>
        <dbReference type="ChEBI" id="CHEBI:15378"/>
        <dbReference type="ChEBI" id="CHEBI:29103"/>
    </reaction>
</comment>
<comment type="subunit">
    <text evidence="1">Homodimer. Interacts with RACK1; regulates the distribution of SLC9A6 between endosomes and the plasma membrane.</text>
</comment>
<comment type="subcellular location">
    <subcellularLocation>
        <location evidence="1">Endosome membrane</location>
        <topology evidence="2">Multi-pass membrane protein</topology>
    </subcellularLocation>
    <subcellularLocation>
        <location evidence="5 6">Recycling endosome membrane</location>
        <topology evidence="2">Multi-pass membrane protein</topology>
    </subcellularLocation>
    <subcellularLocation>
        <location evidence="5 6">Early endosome membrane</location>
        <topology evidence="2">Multi-pass membrane protein</topology>
    </subcellularLocation>
    <subcellularLocation>
        <location evidence="6">Late endosome membrane</location>
        <topology evidence="2">Multi-pass membrane protein</topology>
    </subcellularLocation>
    <subcellularLocation>
        <location evidence="3">Cell membrane</location>
        <topology evidence="2">Multi-pass membrane protein</topology>
    </subcellularLocation>
    <text evidence="1">Present predominantly in the recycling compartments including early and recycling endosomes, but undergoes plasma membrane localization during vesicular recycling, which is enhanced upon certain stimuli, such as hypoxia.</text>
</comment>
<comment type="developmental stage">
    <text evidence="5">Developmentally regulated in area CA1 of the hippocamus, peaking at around postnatal day 50 and declining thereafter.</text>
</comment>
<comment type="PTM">
    <text evidence="1">Ubiquitinated (in vitro).</text>
</comment>
<comment type="PTM">
    <text evidence="1">Glycosylated.</text>
</comment>
<comment type="disruption phenotype">
    <text evidence="6">The SLC9A6 null mice show a 10-20% increased mortality after birth, yet the surviving mice do not display any obvious difference. Behavioral tests reveal a modest motor hyperactivity associated with coordination deficits and limited ataxia. Neurons from these deficient mice exhibit endosomal hyperacidification, as well as impoverished neuronal arborization and attendant circuit dysfunction.</text>
</comment>
<comment type="similarity">
    <text evidence="9">Belongs to the monovalent cation:proton antiporter 1 (CPA1) transporter (TC 2.A.36) family.</text>
</comment>